<comment type="function">
    <text evidence="3 4 5 8">Component the THO subcomplex of the TREX complex, which operates in coupling transcription elongation to mRNA export. The THO complex is recruited to transcribed genes and moves along the gene with the elongating polymerase during transcription. THO is important for stabilizing nascent RNA in the RNA polymerase II elongation complex by preventing formation of DNA:RNA hybrids behind the elongating polymerase. It functions in cotranscriptional formation of an export-competent messenger ribonucleoprotein particle (mRNP) by facilitating the loading of ATP-dependent RNA helicase SUB2 and the mRNA export factor YRA1 along the nascent mRNA.</text>
</comment>
<comment type="subunit">
    <text evidence="1 2">Component of the THO complex, which is composed of HPR1, MFT1, THO2 and THP2. Together with SUB2, TEX1 and YRA1, THO forms the transcription/export (TREX) complex. THO associates with DNA and RNA in vitro.</text>
</comment>
<comment type="interaction">
    <interactant intactId="EBI-30898">
        <id>O13539</id>
    </interactant>
    <interactant intactId="EBI-7410">
        <id>P25555</id>
        <label>GBP2</label>
    </interactant>
    <organismsDiffer>false</organismsDiffer>
    <experiments>4</experiments>
</comment>
<comment type="interaction">
    <interactant intactId="EBI-30898">
        <id>O13539</id>
    </interactant>
    <interactant intactId="EBI-10841">
        <id>P33441</id>
        <label>MFT1</label>
    </interactant>
    <organismsDiffer>false</organismsDiffer>
    <experiments>5</experiments>
</comment>
<comment type="subcellular location">
    <subcellularLocation>
        <location evidence="1 6">Nucleus</location>
    </subcellularLocation>
</comment>
<comment type="miscellaneous">
    <text evidence="7">Present with 2840 molecules/cell in log phase SD medium.</text>
</comment>
<sequence length="261" mass="30299">MTKEEGRTYFESLCEEEQSLQESQTHLLNILDILSVLADPRSSDDLLTESLKKLPDLHRELINSSIRLRYDKYQTREAQLLEDTKTGRDVAAGVQNPKSISEYYSTFEHLNRDTLRYINLLKRLSVDLAKQVEVSDPSVTVYEMDKWVPSEKLQGILEQYCAPDTDIRGVDAQIKNYLDQIKMARAKFGLENKYSLKERLSTLTKELNHWRKEWDDIEMLMFGDDAHSMKKMIQKIDSLKSEINAPSESYPVDKEGDIVLE</sequence>
<feature type="chain" id="PRO_0000267642" description="THO complex subunit THP2">
    <location>
        <begin position="1"/>
        <end position="261"/>
    </location>
</feature>
<feature type="helix" evidence="10">
    <location>
        <begin position="9"/>
        <end position="12"/>
    </location>
</feature>
<feature type="helix" evidence="10">
    <location>
        <begin position="15"/>
        <end position="36"/>
    </location>
</feature>
<feature type="helix" evidence="10">
    <location>
        <begin position="46"/>
        <end position="51"/>
    </location>
</feature>
<feature type="helix" evidence="10">
    <location>
        <begin position="54"/>
        <end position="78"/>
    </location>
</feature>
<feature type="turn" evidence="10">
    <location>
        <begin position="79"/>
        <end position="81"/>
    </location>
</feature>
<feature type="helix" evidence="10">
    <location>
        <begin position="82"/>
        <end position="85"/>
    </location>
</feature>
<feature type="turn" evidence="10">
    <location>
        <begin position="86"/>
        <end position="90"/>
    </location>
</feature>
<feature type="helix" evidence="10">
    <location>
        <begin position="91"/>
        <end position="93"/>
    </location>
</feature>
<feature type="helix" evidence="10">
    <location>
        <begin position="99"/>
        <end position="102"/>
    </location>
</feature>
<feature type="helix" evidence="10">
    <location>
        <begin position="104"/>
        <end position="110"/>
    </location>
</feature>
<feature type="turn" evidence="10">
    <location>
        <begin position="111"/>
        <end position="114"/>
    </location>
</feature>
<feature type="helix" evidence="10">
    <location>
        <begin position="115"/>
        <end position="118"/>
    </location>
</feature>
<feature type="turn" evidence="10">
    <location>
        <begin position="119"/>
        <end position="121"/>
    </location>
</feature>
<feature type="strand" evidence="10">
    <location>
        <begin position="122"/>
        <end position="124"/>
    </location>
</feature>
<feature type="strand" evidence="10">
    <location>
        <begin position="141"/>
        <end position="143"/>
    </location>
</feature>
<feature type="strand" evidence="9">
    <location>
        <begin position="144"/>
        <end position="146"/>
    </location>
</feature>
<feature type="helix" evidence="10">
    <location>
        <begin position="151"/>
        <end position="157"/>
    </location>
</feature>
<feature type="turn" evidence="10">
    <location>
        <begin position="158"/>
        <end position="161"/>
    </location>
</feature>
<feature type="strand" evidence="10">
    <location>
        <begin position="162"/>
        <end position="164"/>
    </location>
</feature>
<feature type="turn" evidence="10">
    <location>
        <begin position="168"/>
        <end position="171"/>
    </location>
</feature>
<feature type="helix" evidence="10">
    <location>
        <begin position="172"/>
        <end position="177"/>
    </location>
</feature>
<feature type="strand" evidence="10">
    <location>
        <begin position="180"/>
        <end position="182"/>
    </location>
</feature>
<feature type="turn" evidence="10">
    <location>
        <begin position="183"/>
        <end position="185"/>
    </location>
</feature>
<feature type="turn" evidence="10">
    <location>
        <begin position="188"/>
        <end position="201"/>
    </location>
</feature>
<feature type="helix" evidence="10">
    <location>
        <begin position="202"/>
        <end position="212"/>
    </location>
</feature>
<feature type="helix" evidence="10">
    <location>
        <begin position="214"/>
        <end position="221"/>
    </location>
</feature>
<feature type="turn" evidence="10">
    <location>
        <begin position="224"/>
        <end position="227"/>
    </location>
</feature>
<feature type="helix" evidence="10">
    <location>
        <begin position="228"/>
        <end position="231"/>
    </location>
</feature>
<feature type="helix" evidence="10">
    <location>
        <begin position="233"/>
        <end position="239"/>
    </location>
</feature>
<reference key="1">
    <citation type="journal article" date="1994" name="Science">
        <title>Complete nucleotide sequence of Saccharomyces cerevisiae chromosome VIII.</title>
        <authorList>
            <person name="Johnston M."/>
            <person name="Andrews S."/>
            <person name="Brinkman R."/>
            <person name="Cooper J."/>
            <person name="Ding H."/>
            <person name="Dover J."/>
            <person name="Du Z."/>
            <person name="Favello A."/>
            <person name="Fulton L."/>
            <person name="Gattung S."/>
            <person name="Geisel C."/>
            <person name="Kirsten J."/>
            <person name="Kucaba T."/>
            <person name="Hillier L.W."/>
            <person name="Jier M."/>
            <person name="Johnston L."/>
            <person name="Langston Y."/>
            <person name="Latreille P."/>
            <person name="Louis E.J."/>
            <person name="Macri C."/>
            <person name="Mardis E."/>
            <person name="Menezes S."/>
            <person name="Mouser L."/>
            <person name="Nhan M."/>
            <person name="Rifkin L."/>
            <person name="Riles L."/>
            <person name="St Peter H."/>
            <person name="Trevaskis E."/>
            <person name="Vaughan K."/>
            <person name="Vignati D."/>
            <person name="Wilcox L."/>
            <person name="Wohldman P."/>
            <person name="Waterston R."/>
            <person name="Wilson R."/>
            <person name="Vaudin M."/>
        </authorList>
    </citation>
    <scope>NUCLEOTIDE SEQUENCE [LARGE SCALE GENOMIC DNA]</scope>
    <source>
        <strain>ATCC 204508 / S288c</strain>
    </source>
</reference>
<reference key="2">
    <citation type="journal article" date="2014" name="G3 (Bethesda)">
        <title>The reference genome sequence of Saccharomyces cerevisiae: Then and now.</title>
        <authorList>
            <person name="Engel S.R."/>
            <person name="Dietrich F.S."/>
            <person name="Fisk D.G."/>
            <person name="Binkley G."/>
            <person name="Balakrishnan R."/>
            <person name="Costanzo M.C."/>
            <person name="Dwight S.S."/>
            <person name="Hitz B.C."/>
            <person name="Karra K."/>
            <person name="Nash R.S."/>
            <person name="Weng S."/>
            <person name="Wong E.D."/>
            <person name="Lloyd P."/>
            <person name="Skrzypek M.S."/>
            <person name="Miyasato S.R."/>
            <person name="Simison M."/>
            <person name="Cherry J.M."/>
        </authorList>
    </citation>
    <scope>GENOME REANNOTATION</scope>
    <source>
        <strain>ATCC 204508 / S288c</strain>
    </source>
</reference>
<reference key="3">
    <citation type="journal article" date="2000" name="EMBO J.">
        <title>A protein complex containing Tho2, Hpr1, Mft1 and a novel protein, Thp2, connects transcription elongation with mitotic recombination in Saccharomyces cerevisiae.</title>
        <authorList>
            <person name="Chavez S."/>
            <person name="Beilharz T."/>
            <person name="Rondon A.G."/>
            <person name="Erdjument-Bromage H."/>
            <person name="Tempst P."/>
            <person name="Svejstrup J.Q."/>
            <person name="Lithgow T."/>
            <person name="Aguilera A."/>
        </authorList>
    </citation>
    <scope>IDENTIFICATION IN THO COMPLEX</scope>
    <scope>IDENTIFICATION BY MASS SPECTROMETRY</scope>
    <scope>SUBCELLULAR LOCATION</scope>
</reference>
<reference key="4">
    <citation type="journal article" date="2002" name="EMBO J.">
        <title>The yeast THO complex and mRNA export factors link RNA metabolism with transcription and genome instability.</title>
        <authorList>
            <person name="Jimeno S."/>
            <person name="Rondon A.G."/>
            <person name="Luna R."/>
            <person name="Aguilera A."/>
        </authorList>
    </citation>
    <scope>FUNCTION</scope>
</reference>
<reference key="5">
    <citation type="journal article" date="2002" name="Nature">
        <title>TREX is a conserved complex coupling transcription with messenger RNA export.</title>
        <authorList>
            <person name="Straesser K."/>
            <person name="Masuda S."/>
            <person name="Mason P."/>
            <person name="Pfannstiel J."/>
            <person name="Oppizzi M."/>
            <person name="Rodriguez-Navarro S."/>
            <person name="Rondon A.G."/>
            <person name="Aguilera A."/>
            <person name="Struhl K."/>
            <person name="Reed R."/>
            <person name="Hurt E."/>
        </authorList>
    </citation>
    <scope>IDENTIFICATION IN TREX COMPLEX</scope>
    <scope>IDENTIFICATION BY MASS SPECTROMETRY</scope>
</reference>
<reference key="6">
    <citation type="journal article" date="2003" name="J. Biol. Chem.">
        <title>Molecular evidence that the eukaryotic THO/TREX complex is required for efficient transcription elongation.</title>
        <authorList>
            <person name="Rondon A.G."/>
            <person name="Jimeno S."/>
            <person name="Garcia-Rubio M."/>
            <person name="Aguilera A."/>
        </authorList>
    </citation>
    <scope>FUNCTION</scope>
</reference>
<reference key="7">
    <citation type="journal article" date="2003" name="Mol. Cell">
        <title>Cotranscriptionally formed DNA:RNA hybrids mediate transcription elongation impairment and transcription-associated recombination.</title>
        <authorList>
            <person name="Huertas P."/>
            <person name="Aguilera A."/>
        </authorList>
    </citation>
    <scope>FUNCTION</scope>
</reference>
<reference key="8">
    <citation type="journal article" date="2003" name="Nature">
        <title>Global analysis of protein localization in budding yeast.</title>
        <authorList>
            <person name="Huh W.-K."/>
            <person name="Falvo J.V."/>
            <person name="Gerke L.C."/>
            <person name="Carroll A.S."/>
            <person name="Howson R.W."/>
            <person name="Weissman J.S."/>
            <person name="O'Shea E.K."/>
        </authorList>
    </citation>
    <scope>SUBCELLULAR LOCATION [LARGE SCALE ANALYSIS]</scope>
</reference>
<reference key="9">
    <citation type="journal article" date="2003" name="Nature">
        <title>Global analysis of protein expression in yeast.</title>
        <authorList>
            <person name="Ghaemmaghami S."/>
            <person name="Huh W.-K."/>
            <person name="Bower K."/>
            <person name="Howson R.W."/>
            <person name="Belle A."/>
            <person name="Dephoure N."/>
            <person name="O'Shea E.K."/>
            <person name="Weissman J.S."/>
        </authorList>
    </citation>
    <scope>LEVEL OF PROTEIN EXPRESSION [LARGE SCALE ANALYSIS]</scope>
</reference>
<reference key="10">
    <citation type="journal article" date="2004" name="EMBO J.">
        <title>Biochemical analysis of TREX complex recruitment to intronless and intron-containing yeast genes.</title>
        <authorList>
            <person name="Abruzzi K.C."/>
            <person name="Lacadie S."/>
            <person name="Rosbash M."/>
        </authorList>
    </citation>
    <scope>FUNCTION</scope>
</reference>
<reference key="11">
    <citation type="journal article" date="2008" name="Mol. Cell. Proteomics">
        <title>A multidimensional chromatography technology for in-depth phosphoproteome analysis.</title>
        <authorList>
            <person name="Albuquerque C.P."/>
            <person name="Smolka M.B."/>
            <person name="Payne S.H."/>
            <person name="Bafna V."/>
            <person name="Eng J."/>
            <person name="Zhou H."/>
        </authorList>
    </citation>
    <scope>IDENTIFICATION BY MASS SPECTROMETRY [LARGE SCALE ANALYSIS]</scope>
</reference>
<gene>
    <name type="primary">THP2</name>
    <name type="ordered locus">YHR167W</name>
</gene>
<dbReference type="EMBL" id="U00027">
    <property type="protein sequence ID" value="AAB68025.1"/>
    <property type="molecule type" value="Genomic_DNA"/>
</dbReference>
<dbReference type="EMBL" id="BK006934">
    <property type="protein sequence ID" value="DAA06860.1"/>
    <property type="molecule type" value="Genomic_DNA"/>
</dbReference>
<dbReference type="PIR" id="S52609">
    <property type="entry name" value="S52609"/>
</dbReference>
<dbReference type="RefSeq" id="NP_012037.1">
    <property type="nucleotide sequence ID" value="NM_001179298.1"/>
</dbReference>
<dbReference type="PDB" id="7APX">
    <property type="method" value="EM"/>
    <property type="resolution" value="3.40 A"/>
    <property type="chains" value="C=1-261"/>
</dbReference>
<dbReference type="PDB" id="7AQO">
    <property type="method" value="EM"/>
    <property type="resolution" value="4.50 A"/>
    <property type="chains" value="C/J=1-261"/>
</dbReference>
<dbReference type="PDB" id="7LUV">
    <property type="method" value="EM"/>
    <property type="resolution" value="3.70 A"/>
    <property type="chains" value="B=1-261"/>
</dbReference>
<dbReference type="PDB" id="7V2W">
    <property type="method" value="EM"/>
    <property type="resolution" value="3.20 A"/>
    <property type="chains" value="J=1-261"/>
</dbReference>
<dbReference type="PDB" id="7V2Y">
    <property type="method" value="EM"/>
    <property type="resolution" value="3.40 A"/>
    <property type="chains" value="E=1-261"/>
</dbReference>
<dbReference type="PDBsum" id="7APX"/>
<dbReference type="PDBsum" id="7AQO"/>
<dbReference type="PDBsum" id="7LUV"/>
<dbReference type="PDBsum" id="7V2W"/>
<dbReference type="PDBsum" id="7V2Y"/>
<dbReference type="EMDB" id="EMD-11859"/>
<dbReference type="EMDB" id="EMD-16841"/>
<dbReference type="EMDB" id="EMD-23527"/>
<dbReference type="EMDB" id="EMD-31669"/>
<dbReference type="EMDB" id="EMD-31670"/>
<dbReference type="SMR" id="O13539"/>
<dbReference type="BioGRID" id="36601">
    <property type="interactions" value="431"/>
</dbReference>
<dbReference type="ComplexPortal" id="CPX-1792">
    <property type="entry name" value="THO complex"/>
</dbReference>
<dbReference type="ComplexPortal" id="CPX-1793">
    <property type="entry name" value="TREX complex"/>
</dbReference>
<dbReference type="DIP" id="DIP-4246N"/>
<dbReference type="FunCoup" id="O13539">
    <property type="interactions" value="78"/>
</dbReference>
<dbReference type="IntAct" id="O13539">
    <property type="interactions" value="32"/>
</dbReference>
<dbReference type="MINT" id="O13539"/>
<dbReference type="STRING" id="4932.YHR167W"/>
<dbReference type="TCDB" id="3.A.22.1.1">
    <property type="family name" value="the transcription-coupled trex/tap nuclear mrna export complex (trex) family"/>
</dbReference>
<dbReference type="iPTMnet" id="O13539"/>
<dbReference type="PaxDb" id="4932-YHR167W"/>
<dbReference type="PeptideAtlas" id="O13539"/>
<dbReference type="EnsemblFungi" id="YHR167W_mRNA">
    <property type="protein sequence ID" value="YHR167W"/>
    <property type="gene ID" value="YHR167W"/>
</dbReference>
<dbReference type="GeneID" id="856572"/>
<dbReference type="KEGG" id="sce:YHR167W"/>
<dbReference type="AGR" id="SGD:S000001210"/>
<dbReference type="SGD" id="S000001210">
    <property type="gene designation" value="THP2"/>
</dbReference>
<dbReference type="VEuPathDB" id="FungiDB:YHR167W"/>
<dbReference type="eggNOG" id="ENOG502RXUV">
    <property type="taxonomic scope" value="Eukaryota"/>
</dbReference>
<dbReference type="HOGENOM" id="CLU_091043_0_0_1"/>
<dbReference type="InParanoid" id="O13539"/>
<dbReference type="OMA" id="EWDDIEM"/>
<dbReference type="OrthoDB" id="4035012at2759"/>
<dbReference type="BioCyc" id="YEAST:G3O-31201-MONOMER"/>
<dbReference type="PRO" id="PR:O13539"/>
<dbReference type="Proteomes" id="UP000002311">
    <property type="component" value="Chromosome VIII"/>
</dbReference>
<dbReference type="RNAct" id="O13539">
    <property type="molecule type" value="protein"/>
</dbReference>
<dbReference type="GO" id="GO:0000446">
    <property type="term" value="C:nucleoplasmic THO complex"/>
    <property type="evidence" value="ECO:0000315"/>
    <property type="project" value="SGD"/>
</dbReference>
<dbReference type="GO" id="GO:0000347">
    <property type="term" value="C:THO complex"/>
    <property type="evidence" value="ECO:0000353"/>
    <property type="project" value="ComplexPortal"/>
</dbReference>
<dbReference type="GO" id="GO:0000445">
    <property type="term" value="C:THO complex part of transcription export complex"/>
    <property type="evidence" value="ECO:0000315"/>
    <property type="project" value="SGD"/>
</dbReference>
<dbReference type="GO" id="GO:0000346">
    <property type="term" value="C:transcription export complex"/>
    <property type="evidence" value="ECO:0000353"/>
    <property type="project" value="ComplexPortal"/>
</dbReference>
<dbReference type="GO" id="GO:0003676">
    <property type="term" value="F:nucleic acid binding"/>
    <property type="evidence" value="ECO:0000314"/>
    <property type="project" value="SGD"/>
</dbReference>
<dbReference type="GO" id="GO:0097185">
    <property type="term" value="P:cellular response to azide"/>
    <property type="evidence" value="ECO:0000315"/>
    <property type="project" value="SGD"/>
</dbReference>
<dbReference type="GO" id="GO:0006310">
    <property type="term" value="P:DNA recombination"/>
    <property type="evidence" value="ECO:0000315"/>
    <property type="project" value="SGD"/>
</dbReference>
<dbReference type="GO" id="GO:0006406">
    <property type="term" value="P:mRNA export from nucleus"/>
    <property type="evidence" value="ECO:0000315"/>
    <property type="project" value="SGD"/>
</dbReference>
<dbReference type="GO" id="GO:0034063">
    <property type="term" value="P:stress granule assembly"/>
    <property type="evidence" value="ECO:0000315"/>
    <property type="project" value="SGD"/>
</dbReference>
<dbReference type="GO" id="GO:0006368">
    <property type="term" value="P:transcription elongation by RNA polymerase II"/>
    <property type="evidence" value="ECO:0000315"/>
    <property type="project" value="SGD"/>
</dbReference>
<dbReference type="InterPro" id="IPR018557">
    <property type="entry name" value="THO_cplx_su_Thp2"/>
</dbReference>
<dbReference type="Pfam" id="PF09432">
    <property type="entry name" value="THP2"/>
    <property type="match status" value="1"/>
</dbReference>
<keyword id="KW-0002">3D-structure</keyword>
<keyword id="KW-0539">Nucleus</keyword>
<keyword id="KW-1185">Reference proteome</keyword>
<keyword id="KW-0804">Transcription</keyword>
<keyword id="KW-0805">Transcription regulation</keyword>
<proteinExistence type="evidence at protein level"/>
<evidence type="ECO:0000269" key="1">
    <source>
    </source>
</evidence>
<evidence type="ECO:0000269" key="2">
    <source>
    </source>
</evidence>
<evidence type="ECO:0000269" key="3">
    <source>
    </source>
</evidence>
<evidence type="ECO:0000269" key="4">
    <source>
    </source>
</evidence>
<evidence type="ECO:0000269" key="5">
    <source>
    </source>
</evidence>
<evidence type="ECO:0000269" key="6">
    <source>
    </source>
</evidence>
<evidence type="ECO:0000269" key="7">
    <source>
    </source>
</evidence>
<evidence type="ECO:0000269" key="8">
    <source>
    </source>
</evidence>
<evidence type="ECO:0007829" key="9">
    <source>
        <dbReference type="PDB" id="7APX"/>
    </source>
</evidence>
<evidence type="ECO:0007829" key="10">
    <source>
        <dbReference type="PDB" id="7V2W"/>
    </source>
</evidence>
<name>THP2_YEAST</name>
<accession>O13539</accession>
<accession>D3DLB6</accession>
<organism>
    <name type="scientific">Saccharomyces cerevisiae (strain ATCC 204508 / S288c)</name>
    <name type="common">Baker's yeast</name>
    <dbReference type="NCBI Taxonomy" id="559292"/>
    <lineage>
        <taxon>Eukaryota</taxon>
        <taxon>Fungi</taxon>
        <taxon>Dikarya</taxon>
        <taxon>Ascomycota</taxon>
        <taxon>Saccharomycotina</taxon>
        <taxon>Saccharomycetes</taxon>
        <taxon>Saccharomycetales</taxon>
        <taxon>Saccharomycetaceae</taxon>
        <taxon>Saccharomyces</taxon>
    </lineage>
</organism>
<protein>
    <recommendedName>
        <fullName>THO complex subunit THP2</fullName>
    </recommendedName>
</protein>